<accession>P0A4K4</accession>
<accession>Q9ZEX9</accession>
<gene>
    <name type="primary">pmrA</name>
    <name type="ordered locus">SP_0972</name>
</gene>
<protein>
    <recommendedName>
        <fullName>Multi-drug resistance efflux pump PmrA</fullName>
    </recommendedName>
</protein>
<proteinExistence type="inferred from homology"/>
<name>PMRA_STRPN</name>
<dbReference type="EMBL" id="AJ007367">
    <property type="protein sequence ID" value="CAA07482.1"/>
    <property type="molecule type" value="Genomic_DNA"/>
</dbReference>
<dbReference type="EMBL" id="AE005672">
    <property type="protein sequence ID" value="AAK75093.1"/>
    <property type="molecule type" value="Genomic_DNA"/>
</dbReference>
<dbReference type="PIR" id="D95112">
    <property type="entry name" value="D95112"/>
</dbReference>
<dbReference type="RefSeq" id="WP_000136147.1">
    <property type="nucleotide sequence ID" value="NZ_CP155539.1"/>
</dbReference>
<dbReference type="SMR" id="P0A4K4"/>
<dbReference type="TCDB" id="2.A.1.2.34">
    <property type="family name" value="the major facilitator superfamily (mfs)"/>
</dbReference>
<dbReference type="PaxDb" id="170187-SP_0972"/>
<dbReference type="EnsemblBacteria" id="AAK75093">
    <property type="protein sequence ID" value="AAK75093"/>
    <property type="gene ID" value="SP_0972"/>
</dbReference>
<dbReference type="KEGG" id="spn:SP_0972"/>
<dbReference type="eggNOG" id="COG2814">
    <property type="taxonomic scope" value="Bacteria"/>
</dbReference>
<dbReference type="PhylomeDB" id="P0A4K4"/>
<dbReference type="BioCyc" id="SPNE170187:G1FZB-1000-MONOMER"/>
<dbReference type="Proteomes" id="UP000000585">
    <property type="component" value="Chromosome"/>
</dbReference>
<dbReference type="GO" id="GO:0005886">
    <property type="term" value="C:plasma membrane"/>
    <property type="evidence" value="ECO:0007669"/>
    <property type="project" value="UniProtKB-SubCell"/>
</dbReference>
<dbReference type="GO" id="GO:0022857">
    <property type="term" value="F:transmembrane transporter activity"/>
    <property type="evidence" value="ECO:0007669"/>
    <property type="project" value="InterPro"/>
</dbReference>
<dbReference type="CDD" id="cd17391">
    <property type="entry name" value="MFS_MdtG_MDR_like"/>
    <property type="match status" value="1"/>
</dbReference>
<dbReference type="FunFam" id="1.20.1250.20:FF:000587">
    <property type="entry name" value="Multi-drug resistance efflux pump PmrA"/>
    <property type="match status" value="1"/>
</dbReference>
<dbReference type="Gene3D" id="1.20.1250.20">
    <property type="entry name" value="MFS general substrate transporter like domains"/>
    <property type="match status" value="2"/>
</dbReference>
<dbReference type="InterPro" id="IPR011701">
    <property type="entry name" value="MFS"/>
</dbReference>
<dbReference type="InterPro" id="IPR020846">
    <property type="entry name" value="MFS_dom"/>
</dbReference>
<dbReference type="InterPro" id="IPR050497">
    <property type="entry name" value="MFS_MdtG_subfamily"/>
</dbReference>
<dbReference type="InterPro" id="IPR005828">
    <property type="entry name" value="MFS_sugar_transport-like"/>
</dbReference>
<dbReference type="InterPro" id="IPR036259">
    <property type="entry name" value="MFS_trans_sf"/>
</dbReference>
<dbReference type="InterPro" id="IPR001958">
    <property type="entry name" value="Tet-R_TetA/multi-R_MdtG-like"/>
</dbReference>
<dbReference type="PANTHER" id="PTHR43414">
    <property type="entry name" value="MULTIDRUG RESISTANCE PROTEIN MDTG"/>
    <property type="match status" value="1"/>
</dbReference>
<dbReference type="PANTHER" id="PTHR43414:SF6">
    <property type="entry name" value="MULTIDRUG RESISTANCE PROTEIN MDTG"/>
    <property type="match status" value="1"/>
</dbReference>
<dbReference type="Pfam" id="PF07690">
    <property type="entry name" value="MFS_1"/>
    <property type="match status" value="1"/>
</dbReference>
<dbReference type="Pfam" id="PF00083">
    <property type="entry name" value="Sugar_tr"/>
    <property type="match status" value="1"/>
</dbReference>
<dbReference type="PRINTS" id="PR01035">
    <property type="entry name" value="TCRTETA"/>
</dbReference>
<dbReference type="SUPFAM" id="SSF103473">
    <property type="entry name" value="MFS general substrate transporter"/>
    <property type="match status" value="1"/>
</dbReference>
<dbReference type="PROSITE" id="PS50850">
    <property type="entry name" value="MFS"/>
    <property type="match status" value="1"/>
</dbReference>
<organism>
    <name type="scientific">Streptococcus pneumoniae serotype 4 (strain ATCC BAA-334 / TIGR4)</name>
    <dbReference type="NCBI Taxonomy" id="170187"/>
    <lineage>
        <taxon>Bacteria</taxon>
        <taxon>Bacillati</taxon>
        <taxon>Bacillota</taxon>
        <taxon>Bacilli</taxon>
        <taxon>Lactobacillales</taxon>
        <taxon>Streptococcaceae</taxon>
        <taxon>Streptococcus</taxon>
    </lineage>
</organism>
<evidence type="ECO:0000255" key="1"/>
<evidence type="ECO:0000305" key="2"/>
<sequence>MTEINWKDNLRIAWFGNFLTGASISLVVPFMPIFVENLGVGSQQVAFYAGLAISVSAISAALFSPIWGILADKYGRKPMMIRAGLAMTITMGGLAFVPNIYWLIFLRLLNGVFAGFVPNATALIASQVPKEKSGSALGTLSTGVVAGTLTGPFIGGFIAELFGIRTVFLLVGSFLFLAAILTICFIKEDFQPVAKEKAIPTKELFTSVKYPYLLLNLFLTSFVIQFSAQSIGPILALYVRDLGQTENLLFVSGLIVSSMGFSSMMSAGVMGKLGDKVGNHRLLVVAQFYSVIIYLLCANASSPLQLGLYRFLFGLGTGALIPGVNALLSKMTPKAGISRVFAFNQVFFYLGGVVGPMAGSAVAGQFGYHAVFYATSLCVAFSCLFNLIQFRTLLKVKEI</sequence>
<reference key="1">
    <citation type="journal article" date="1999" name="Antimicrob. Agents Chemother.">
        <title>Identification of an efflux pump gene, pmrA, associated with fluoroquinolone resistance in Streptococcus pneumoniae.</title>
        <authorList>
            <person name="Gill M.J."/>
            <person name="Brenwald N.P."/>
            <person name="Wise R."/>
        </authorList>
    </citation>
    <scope>NUCLEOTIDE SEQUENCE [GENOMIC DNA]</scope>
</reference>
<reference key="2">
    <citation type="journal article" date="2001" name="Science">
        <title>Complete genome sequence of a virulent isolate of Streptococcus pneumoniae.</title>
        <authorList>
            <person name="Tettelin H."/>
            <person name="Nelson K.E."/>
            <person name="Paulsen I.T."/>
            <person name="Eisen J.A."/>
            <person name="Read T.D."/>
            <person name="Peterson S.N."/>
            <person name="Heidelberg J.F."/>
            <person name="DeBoy R.T."/>
            <person name="Haft D.H."/>
            <person name="Dodson R.J."/>
            <person name="Durkin A.S."/>
            <person name="Gwinn M.L."/>
            <person name="Kolonay J.F."/>
            <person name="Nelson W.C."/>
            <person name="Peterson J.D."/>
            <person name="Umayam L.A."/>
            <person name="White O."/>
            <person name="Salzberg S.L."/>
            <person name="Lewis M.R."/>
            <person name="Radune D."/>
            <person name="Holtzapple E.K."/>
            <person name="Khouri H.M."/>
            <person name="Wolf A.M."/>
            <person name="Utterback T.R."/>
            <person name="Hansen C.L."/>
            <person name="McDonald L.A."/>
            <person name="Feldblyum T.V."/>
            <person name="Angiuoli S.V."/>
            <person name="Dickinson T."/>
            <person name="Hickey E.K."/>
            <person name="Holt I.E."/>
            <person name="Loftus B.J."/>
            <person name="Yang F."/>
            <person name="Smith H.O."/>
            <person name="Venter J.C."/>
            <person name="Dougherty B.A."/>
            <person name="Morrison D.A."/>
            <person name="Hollingshead S.K."/>
            <person name="Fraser C.M."/>
        </authorList>
    </citation>
    <scope>NUCLEOTIDE SEQUENCE [LARGE SCALE GENOMIC DNA]</scope>
    <source>
        <strain>ATCC BAA-334 / TIGR4</strain>
    </source>
</reference>
<feature type="chain" id="PRO_0000173377" description="Multi-drug resistance efflux pump PmrA">
    <location>
        <begin position="1"/>
        <end position="399"/>
    </location>
</feature>
<feature type="transmembrane region" description="Helical" evidence="1">
    <location>
        <begin position="12"/>
        <end position="34"/>
    </location>
</feature>
<feature type="transmembrane region" description="Helical" evidence="1">
    <location>
        <begin position="49"/>
        <end position="71"/>
    </location>
</feature>
<feature type="transmembrane region" description="Helical" evidence="1">
    <location>
        <begin position="84"/>
        <end position="106"/>
    </location>
</feature>
<feature type="transmembrane region" description="Helical" evidence="1">
    <location>
        <begin position="140"/>
        <end position="162"/>
    </location>
</feature>
<feature type="transmembrane region" description="Helical" evidence="1">
    <location>
        <begin position="167"/>
        <end position="186"/>
    </location>
</feature>
<feature type="transmembrane region" description="Helical" evidence="1">
    <location>
        <begin position="217"/>
        <end position="239"/>
    </location>
</feature>
<feature type="transmembrane region" description="Helical" evidence="1">
    <location>
        <begin position="248"/>
        <end position="270"/>
    </location>
</feature>
<feature type="transmembrane region" description="Helical" evidence="1">
    <location>
        <begin position="306"/>
        <end position="328"/>
    </location>
</feature>
<feature type="transmembrane region" description="Helical" evidence="1">
    <location>
        <begin position="340"/>
        <end position="362"/>
    </location>
</feature>
<feature type="transmembrane region" description="Helical" evidence="1">
    <location>
        <begin position="366"/>
        <end position="388"/>
    </location>
</feature>
<keyword id="KW-1003">Cell membrane</keyword>
<keyword id="KW-0472">Membrane</keyword>
<keyword id="KW-1185">Reference proteome</keyword>
<keyword id="KW-0812">Transmembrane</keyword>
<keyword id="KW-1133">Transmembrane helix</keyword>
<keyword id="KW-0813">Transport</keyword>
<comment type="function">
    <text>Efflux pump for various substrates.</text>
</comment>
<comment type="subcellular location">
    <subcellularLocation>
        <location evidence="2">Cell membrane</location>
        <topology evidence="2">Multi-pass membrane protein</topology>
    </subcellularLocation>
</comment>
<comment type="similarity">
    <text evidence="2">Belongs to the major facilitator superfamily. TCR/Tet family.</text>
</comment>